<gene>
    <name type="primary">OPG084</name>
    <name type="synonym">NPH2</name>
    <name type="ORF">TI8R</name>
</gene>
<dbReference type="EC" id="3.6.4.13"/>
<dbReference type="EMBL" id="AF095689">
    <property type="protein sequence ID" value="AAF33937.1"/>
    <property type="molecule type" value="Genomic_DNA"/>
</dbReference>
<dbReference type="SMR" id="Q9JFC3"/>
<dbReference type="Proteomes" id="UP000163220">
    <property type="component" value="Genome"/>
</dbReference>
<dbReference type="GO" id="GO:0044423">
    <property type="term" value="C:virion component"/>
    <property type="evidence" value="ECO:0007669"/>
    <property type="project" value="UniProtKB-KW"/>
</dbReference>
<dbReference type="GO" id="GO:0005524">
    <property type="term" value="F:ATP binding"/>
    <property type="evidence" value="ECO:0007669"/>
    <property type="project" value="UniProtKB-KW"/>
</dbReference>
<dbReference type="GO" id="GO:0016887">
    <property type="term" value="F:ATP hydrolysis activity"/>
    <property type="evidence" value="ECO:0007669"/>
    <property type="project" value="RHEA"/>
</dbReference>
<dbReference type="GO" id="GO:0003723">
    <property type="term" value="F:RNA binding"/>
    <property type="evidence" value="ECO:0007669"/>
    <property type="project" value="TreeGrafter"/>
</dbReference>
<dbReference type="GO" id="GO:0003724">
    <property type="term" value="F:RNA helicase activity"/>
    <property type="evidence" value="ECO:0007669"/>
    <property type="project" value="UniProtKB-EC"/>
</dbReference>
<dbReference type="Gene3D" id="3.40.50.300">
    <property type="entry name" value="P-loop containing nucleotide triphosphate hydrolases"/>
    <property type="match status" value="2"/>
</dbReference>
<dbReference type="InterPro" id="IPR011545">
    <property type="entry name" value="DEAD/DEAH_box_helicase_dom"/>
</dbReference>
<dbReference type="InterPro" id="IPR002464">
    <property type="entry name" value="DNA/RNA_helicase_DEAH_CS"/>
</dbReference>
<dbReference type="InterPro" id="IPR014001">
    <property type="entry name" value="Helicase_ATP-bd"/>
</dbReference>
<dbReference type="InterPro" id="IPR001650">
    <property type="entry name" value="Helicase_C-like"/>
</dbReference>
<dbReference type="InterPro" id="IPR021892">
    <property type="entry name" value="NPH-II"/>
</dbReference>
<dbReference type="InterPro" id="IPR027417">
    <property type="entry name" value="P-loop_NTPase"/>
</dbReference>
<dbReference type="PANTHER" id="PTHR18934">
    <property type="entry name" value="ATP-DEPENDENT RNA HELICASE"/>
    <property type="match status" value="1"/>
</dbReference>
<dbReference type="PANTHER" id="PTHR18934:SF99">
    <property type="entry name" value="ATP-DEPENDENT RNA HELICASE DHX37-RELATED"/>
    <property type="match status" value="1"/>
</dbReference>
<dbReference type="Pfam" id="PF00270">
    <property type="entry name" value="DEAD"/>
    <property type="match status" value="1"/>
</dbReference>
<dbReference type="Pfam" id="PF00271">
    <property type="entry name" value="Helicase_C"/>
    <property type="match status" value="1"/>
</dbReference>
<dbReference type="Pfam" id="PF12011">
    <property type="entry name" value="NPH-II"/>
    <property type="match status" value="1"/>
</dbReference>
<dbReference type="SMART" id="SM00487">
    <property type="entry name" value="DEXDc"/>
    <property type="match status" value="1"/>
</dbReference>
<dbReference type="SMART" id="SM00490">
    <property type="entry name" value="HELICc"/>
    <property type="match status" value="1"/>
</dbReference>
<dbReference type="SUPFAM" id="SSF52540">
    <property type="entry name" value="P-loop containing nucleoside triphosphate hydrolases"/>
    <property type="match status" value="1"/>
</dbReference>
<dbReference type="PROSITE" id="PS00690">
    <property type="entry name" value="DEAH_ATP_HELICASE"/>
    <property type="match status" value="1"/>
</dbReference>
<dbReference type="PROSITE" id="PS51192">
    <property type="entry name" value="HELICASE_ATP_BIND_1"/>
    <property type="match status" value="1"/>
</dbReference>
<dbReference type="PROSITE" id="PS51194">
    <property type="entry name" value="HELICASE_CTER"/>
    <property type="match status" value="1"/>
</dbReference>
<proteinExistence type="evidence at transcript level"/>
<protein>
    <recommendedName>
        <fullName>RNA helicase NPH-II</fullName>
        <ecNumber>3.6.4.13</ecNumber>
    </recommendedName>
    <alternativeName>
        <fullName>Nucleoside triphosphatase II</fullName>
        <shortName>NTPase II</shortName>
    </alternativeName>
    <alternativeName>
        <fullName>Nucleoside triphosphate phosphohydrolase II</fullName>
        <shortName>NPH II</shortName>
    </alternativeName>
    <alternativeName>
        <fullName>RNA helicase I8</fullName>
    </alternativeName>
</protein>
<comment type="function">
    <text evidence="1">NTP-dependent helicase that catalyzes unidirectional unwinding of 3'tailed duplex RNAs and plays an important role during transcription of early mRNAs, presumably by preventing R-loop formation behind the elongating RNA polymerase. Might also play a role in the export of newly synthesized mRNA chains out of the core into the cytoplasm. Required for replication and propagation of viral particles.</text>
</comment>
<comment type="catalytic activity">
    <reaction evidence="1">
        <text>ATP + H2O = ADP + phosphate + H(+)</text>
        <dbReference type="Rhea" id="RHEA:13065"/>
        <dbReference type="ChEBI" id="CHEBI:15377"/>
        <dbReference type="ChEBI" id="CHEBI:15378"/>
        <dbReference type="ChEBI" id="CHEBI:30616"/>
        <dbReference type="ChEBI" id="CHEBI:43474"/>
        <dbReference type="ChEBI" id="CHEBI:456216"/>
        <dbReference type="EC" id="3.6.4.13"/>
    </reaction>
</comment>
<comment type="subunit">
    <text evidence="1">Monomer.</text>
</comment>
<comment type="subcellular location">
    <subcellularLocation>
        <location evidence="1">Virion</location>
    </subcellularLocation>
    <text evidence="1">Localizes to the virion core.</text>
</comment>
<comment type="induction">
    <text>Expressed both early and late in the viral replicative cycle.</text>
</comment>
<comment type="similarity">
    <text evidence="4">Belongs to the DEAD box helicase family. DEAH subfamily.</text>
</comment>
<name>NPH2_VACCT</name>
<sequence length="676" mass="77572">MEKNLPDIFFFPNCVNVFSYKYSQDEFSNMSKTERDSFSLAVFPVIKHRWHNAHVVKHKGIYKVSTEARGKKVSPPSLGKPAHINLTAKQYIYSEHTISFECYSFLKCITNTEINSFDEYILRGLLEAGNSLQIFSNSVGKRTDTIGVLGNKYPFSKIPLASLTPKAQREIFSAWISHRPVVLTGGTGVGKTSQVPKLLLWFNYLFGGFSTLDKITDFHERPVILSLPRIALVRLHSNTILKSLGFKVLDGSPISLRYGSIPEELINKQPKKYGIVFSTHKLSLTKLFSYGTLIIDEVHEHDQIGDIIIAVARKHHTKIDSMFLMTATLEDDRERLKVFLPNPAFIHIPGDTLFKISEVFIHNKINPSSRMAYIEEEKRNLVTAIQMYTPPDGSSGIVFVASVAQCHEYKSYLEKRLPYDMYIIHGKVLDIDEILEKVYSSPNVSIIISTPYLESSVTIHNVTHIYDMGRVFVPAPFGGSQQFISKSMRDQRKGRVGRVNPGTYVYFYDLSYMKSIQRIDSEFLHNYILYANKFNLTLPEDLFIIPTNLDILWRTKEYIDSFDISTETWNKLLSNYYMKMIEYAKLYVLSPILAEELDNFERTGELTSIVREAILSLNLRIKILNFKHKDDDTYIHFCKILFGVYNGTNATIYYHRPLTGYINIISDTIFVPVDNN</sequence>
<evidence type="ECO:0000250" key="1">
    <source>
        <dbReference type="UniProtKB" id="P12927"/>
    </source>
</evidence>
<evidence type="ECO:0000255" key="2">
    <source>
        <dbReference type="PROSITE-ProRule" id="PRU00541"/>
    </source>
</evidence>
<evidence type="ECO:0000255" key="3">
    <source>
        <dbReference type="PROSITE-ProRule" id="PRU00542"/>
    </source>
</evidence>
<evidence type="ECO:0000305" key="4"/>
<organismHost>
    <name type="scientific">Homo sapiens</name>
    <name type="common">Human</name>
    <dbReference type="NCBI Taxonomy" id="9606"/>
</organismHost>
<organism>
    <name type="scientific">Vaccinia virus (strain Tian Tan)</name>
    <name type="common">VACV</name>
    <dbReference type="NCBI Taxonomy" id="10253"/>
    <lineage>
        <taxon>Viruses</taxon>
        <taxon>Varidnaviria</taxon>
        <taxon>Bamfordvirae</taxon>
        <taxon>Nucleocytoviricota</taxon>
        <taxon>Pokkesviricetes</taxon>
        <taxon>Chitovirales</taxon>
        <taxon>Poxviridae</taxon>
        <taxon>Chordopoxvirinae</taxon>
        <taxon>Orthopoxvirus</taxon>
        <taxon>Vaccinia virus</taxon>
    </lineage>
</organism>
<accession>Q9JFC3</accession>
<keyword id="KW-0067">ATP-binding</keyword>
<keyword id="KW-0244">Early protein</keyword>
<keyword id="KW-0347">Helicase</keyword>
<keyword id="KW-0378">Hydrolase</keyword>
<keyword id="KW-0426">Late protein</keyword>
<keyword id="KW-0547">Nucleotide-binding</keyword>
<keyword id="KW-0804">Transcription</keyword>
<keyword id="KW-0946">Virion</keyword>
<reference key="1">
    <citation type="submission" date="1998-09" db="EMBL/GenBank/DDBJ databases">
        <title>Complete genomic sequence of vaccinia virus (Tian Tan strain).</title>
        <authorList>
            <person name="Jin Q."/>
            <person name="Hou Y.D."/>
            <person name="Cheng N.H."/>
            <person name="Yao E.M."/>
            <person name="Cheng S.X."/>
            <person name="Yang X.K."/>
            <person name="Jing D.Y."/>
            <person name="Yu W.H."/>
            <person name="Yuan J.S."/>
            <person name="Ma X.J."/>
        </authorList>
    </citation>
    <scope>NUCLEOTIDE SEQUENCE [LARGE SCALE GENOMIC DNA]</scope>
</reference>
<feature type="chain" id="PRO_0000055184" description="RNA helicase NPH-II">
    <location>
        <begin position="1"/>
        <end position="676"/>
    </location>
</feature>
<feature type="domain" description="Helicase ATP-binding" evidence="2">
    <location>
        <begin position="172"/>
        <end position="347"/>
    </location>
</feature>
<feature type="domain" description="Helicase C-terminal" evidence="3">
    <location>
        <begin position="366"/>
        <end position="535"/>
    </location>
</feature>
<feature type="short sequence motif" description="DEXH box">
    <location>
        <begin position="296"/>
        <end position="299"/>
    </location>
</feature>
<feature type="binding site" evidence="2">
    <location>
        <begin position="185"/>
        <end position="192"/>
    </location>
    <ligand>
        <name>ATP</name>
        <dbReference type="ChEBI" id="CHEBI:30616"/>
    </ligand>
</feature>